<organism>
    <name type="scientific">Acetivibrio thermocellus (strain ATCC 27405 / DSM 1237 / JCM 9322 / NBRC 103400 / NCIMB 10682 / NRRL B-4536 / VPI 7372)</name>
    <name type="common">Clostridium thermocellum</name>
    <dbReference type="NCBI Taxonomy" id="203119"/>
    <lineage>
        <taxon>Bacteria</taxon>
        <taxon>Bacillati</taxon>
        <taxon>Bacillota</taxon>
        <taxon>Clostridia</taxon>
        <taxon>Eubacteriales</taxon>
        <taxon>Oscillospiraceae</taxon>
        <taxon>Acetivibrio</taxon>
    </lineage>
</organism>
<keyword id="KW-0963">Cytoplasm</keyword>
<keyword id="KW-0227">DNA damage</keyword>
<keyword id="KW-0233">DNA recombination</keyword>
<keyword id="KW-0234">DNA repair</keyword>
<keyword id="KW-0238">DNA-binding</keyword>
<keyword id="KW-1185">Reference proteome</keyword>
<gene>
    <name evidence="1" type="primary">ruvA</name>
    <name type="ordered locus">Cthe_0181</name>
</gene>
<feature type="chain" id="PRO_1000002435" description="Holliday junction branch migration complex subunit RuvA">
    <location>
        <begin position="1"/>
        <end position="202"/>
    </location>
</feature>
<feature type="region of interest" description="Domain I" evidence="1">
    <location>
        <begin position="1"/>
        <end position="64"/>
    </location>
</feature>
<feature type="region of interest" description="Domain II" evidence="1">
    <location>
        <begin position="65"/>
        <end position="143"/>
    </location>
</feature>
<feature type="region of interest" description="Flexible linker" evidence="1">
    <location>
        <begin position="144"/>
        <end position="152"/>
    </location>
</feature>
<feature type="region of interest" description="Domain III" evidence="1">
    <location>
        <begin position="152"/>
        <end position="202"/>
    </location>
</feature>
<name>RUVA_ACET2</name>
<protein>
    <recommendedName>
        <fullName evidence="1">Holliday junction branch migration complex subunit RuvA</fullName>
    </recommendedName>
</protein>
<proteinExistence type="inferred from homology"/>
<accession>A3DBU3</accession>
<dbReference type="EMBL" id="CP000568">
    <property type="protein sequence ID" value="ABN51422.1"/>
    <property type="molecule type" value="Genomic_DNA"/>
</dbReference>
<dbReference type="RefSeq" id="WP_003512254.1">
    <property type="nucleotide sequence ID" value="NC_009012.1"/>
</dbReference>
<dbReference type="SMR" id="A3DBU3"/>
<dbReference type="STRING" id="203119.Cthe_0181"/>
<dbReference type="GeneID" id="35805095"/>
<dbReference type="KEGG" id="cth:Cthe_0181"/>
<dbReference type="eggNOG" id="COG0632">
    <property type="taxonomic scope" value="Bacteria"/>
</dbReference>
<dbReference type="HOGENOM" id="CLU_087936_3_0_9"/>
<dbReference type="OrthoDB" id="5293449at2"/>
<dbReference type="Proteomes" id="UP000002145">
    <property type="component" value="Chromosome"/>
</dbReference>
<dbReference type="GO" id="GO:0005737">
    <property type="term" value="C:cytoplasm"/>
    <property type="evidence" value="ECO:0007669"/>
    <property type="project" value="UniProtKB-SubCell"/>
</dbReference>
<dbReference type="GO" id="GO:0009379">
    <property type="term" value="C:Holliday junction helicase complex"/>
    <property type="evidence" value="ECO:0007669"/>
    <property type="project" value="InterPro"/>
</dbReference>
<dbReference type="GO" id="GO:0048476">
    <property type="term" value="C:Holliday junction resolvase complex"/>
    <property type="evidence" value="ECO:0007669"/>
    <property type="project" value="UniProtKB-UniRule"/>
</dbReference>
<dbReference type="GO" id="GO:0005524">
    <property type="term" value="F:ATP binding"/>
    <property type="evidence" value="ECO:0007669"/>
    <property type="project" value="InterPro"/>
</dbReference>
<dbReference type="GO" id="GO:0000400">
    <property type="term" value="F:four-way junction DNA binding"/>
    <property type="evidence" value="ECO:0007669"/>
    <property type="project" value="UniProtKB-UniRule"/>
</dbReference>
<dbReference type="GO" id="GO:0009378">
    <property type="term" value="F:four-way junction helicase activity"/>
    <property type="evidence" value="ECO:0007669"/>
    <property type="project" value="InterPro"/>
</dbReference>
<dbReference type="GO" id="GO:0006310">
    <property type="term" value="P:DNA recombination"/>
    <property type="evidence" value="ECO:0007669"/>
    <property type="project" value="UniProtKB-UniRule"/>
</dbReference>
<dbReference type="GO" id="GO:0006281">
    <property type="term" value="P:DNA repair"/>
    <property type="evidence" value="ECO:0007669"/>
    <property type="project" value="UniProtKB-UniRule"/>
</dbReference>
<dbReference type="CDD" id="cd14332">
    <property type="entry name" value="UBA_RuvA_C"/>
    <property type="match status" value="1"/>
</dbReference>
<dbReference type="Gene3D" id="1.10.150.20">
    <property type="entry name" value="5' to 3' exonuclease, C-terminal subdomain"/>
    <property type="match status" value="1"/>
</dbReference>
<dbReference type="Gene3D" id="1.10.8.10">
    <property type="entry name" value="DNA helicase RuvA subunit, C-terminal domain"/>
    <property type="match status" value="1"/>
</dbReference>
<dbReference type="Gene3D" id="2.40.50.140">
    <property type="entry name" value="Nucleic acid-binding proteins"/>
    <property type="match status" value="1"/>
</dbReference>
<dbReference type="HAMAP" id="MF_00031">
    <property type="entry name" value="DNA_HJ_migration_RuvA"/>
    <property type="match status" value="1"/>
</dbReference>
<dbReference type="InterPro" id="IPR013849">
    <property type="entry name" value="DNA_helicase_Holl-junc_RuvA_I"/>
</dbReference>
<dbReference type="InterPro" id="IPR003583">
    <property type="entry name" value="Hlx-hairpin-Hlx_DNA-bd_motif"/>
</dbReference>
<dbReference type="InterPro" id="IPR012340">
    <property type="entry name" value="NA-bd_OB-fold"/>
</dbReference>
<dbReference type="InterPro" id="IPR000085">
    <property type="entry name" value="RuvA"/>
</dbReference>
<dbReference type="InterPro" id="IPR010994">
    <property type="entry name" value="RuvA_2-like"/>
</dbReference>
<dbReference type="InterPro" id="IPR011114">
    <property type="entry name" value="RuvA_C"/>
</dbReference>
<dbReference type="InterPro" id="IPR036267">
    <property type="entry name" value="RuvA_C_sf"/>
</dbReference>
<dbReference type="NCBIfam" id="TIGR00084">
    <property type="entry name" value="ruvA"/>
    <property type="match status" value="1"/>
</dbReference>
<dbReference type="Pfam" id="PF14520">
    <property type="entry name" value="HHH_5"/>
    <property type="match status" value="1"/>
</dbReference>
<dbReference type="Pfam" id="PF07499">
    <property type="entry name" value="RuvA_C"/>
    <property type="match status" value="1"/>
</dbReference>
<dbReference type="Pfam" id="PF01330">
    <property type="entry name" value="RuvA_N"/>
    <property type="match status" value="1"/>
</dbReference>
<dbReference type="SMART" id="SM00278">
    <property type="entry name" value="HhH1"/>
    <property type="match status" value="2"/>
</dbReference>
<dbReference type="SUPFAM" id="SSF46929">
    <property type="entry name" value="DNA helicase RuvA subunit, C-terminal domain"/>
    <property type="match status" value="1"/>
</dbReference>
<dbReference type="SUPFAM" id="SSF50249">
    <property type="entry name" value="Nucleic acid-binding proteins"/>
    <property type="match status" value="1"/>
</dbReference>
<dbReference type="SUPFAM" id="SSF47781">
    <property type="entry name" value="RuvA domain 2-like"/>
    <property type="match status" value="1"/>
</dbReference>
<sequence>MFAYIRGRLEYKNNDFLIVESNGVGYRIFTSLSTISGIGEIGQEVKVYTYLYVREDVISLYGFLTQEELNVFELLISVSGVGPKAAVSVLSAISPSRFSLAVITDDVKTLTKAQGIGKKIAQRIILELKDKIKKEQLTEYAQSEEGGKVLDTDSSKMAEAVSALMVLGYSPAEANKAVSAVYREDMDIETIIKNALKGLARP</sequence>
<evidence type="ECO:0000255" key="1">
    <source>
        <dbReference type="HAMAP-Rule" id="MF_00031"/>
    </source>
</evidence>
<reference key="1">
    <citation type="submission" date="2007-02" db="EMBL/GenBank/DDBJ databases">
        <title>Complete sequence of Clostridium thermocellum ATCC 27405.</title>
        <authorList>
            <consortium name="US DOE Joint Genome Institute"/>
            <person name="Copeland A."/>
            <person name="Lucas S."/>
            <person name="Lapidus A."/>
            <person name="Barry K."/>
            <person name="Detter J.C."/>
            <person name="Glavina del Rio T."/>
            <person name="Hammon N."/>
            <person name="Israni S."/>
            <person name="Dalin E."/>
            <person name="Tice H."/>
            <person name="Pitluck S."/>
            <person name="Chertkov O."/>
            <person name="Brettin T."/>
            <person name="Bruce D."/>
            <person name="Han C."/>
            <person name="Tapia R."/>
            <person name="Gilna P."/>
            <person name="Schmutz J."/>
            <person name="Larimer F."/>
            <person name="Land M."/>
            <person name="Hauser L."/>
            <person name="Kyrpides N."/>
            <person name="Mikhailova N."/>
            <person name="Wu J.H.D."/>
            <person name="Newcomb M."/>
            <person name="Richardson P."/>
        </authorList>
    </citation>
    <scope>NUCLEOTIDE SEQUENCE [LARGE SCALE GENOMIC DNA]</scope>
    <source>
        <strain>ATCC 27405 / DSM 1237 / JCM 9322 / NBRC 103400 / NCIMB 10682 / NRRL B-4536 / VPI 7372</strain>
    </source>
</reference>
<comment type="function">
    <text evidence="1">The RuvA-RuvB-RuvC complex processes Holliday junction (HJ) DNA during genetic recombination and DNA repair, while the RuvA-RuvB complex plays an important role in the rescue of blocked DNA replication forks via replication fork reversal (RFR). RuvA specifically binds to HJ cruciform DNA, conferring on it an open structure. The RuvB hexamer acts as an ATP-dependent pump, pulling dsDNA into and through the RuvAB complex. HJ branch migration allows RuvC to scan DNA until it finds its consensus sequence, where it cleaves and resolves the cruciform DNA.</text>
</comment>
<comment type="subunit">
    <text evidence="1">Homotetramer. Forms an RuvA(8)-RuvB(12)-Holliday junction (HJ) complex. HJ DNA is sandwiched between 2 RuvA tetramers; dsDNA enters through RuvA and exits via RuvB. An RuvB hexamer assembles on each DNA strand where it exits the tetramer. Each RuvB hexamer is contacted by two RuvA subunits (via domain III) on 2 adjacent RuvB subunits; this complex drives branch migration. In the full resolvosome a probable DNA-RuvA(4)-RuvB(12)-RuvC(2) complex forms which resolves the HJ.</text>
</comment>
<comment type="subcellular location">
    <subcellularLocation>
        <location evidence="1">Cytoplasm</location>
    </subcellularLocation>
</comment>
<comment type="domain">
    <text evidence="1">Has three domains with a flexible linker between the domains II and III and assumes an 'L' shape. Domain III is highly mobile and contacts RuvB.</text>
</comment>
<comment type="similarity">
    <text evidence="1">Belongs to the RuvA family.</text>
</comment>